<proteinExistence type="evidence at transcript level"/>
<organism>
    <name type="scientific">Trichoderma harzianum</name>
    <name type="common">Hypocrea lixii</name>
    <dbReference type="NCBI Taxonomy" id="5544"/>
    <lineage>
        <taxon>Eukaryota</taxon>
        <taxon>Fungi</taxon>
        <taxon>Dikarya</taxon>
        <taxon>Ascomycota</taxon>
        <taxon>Pezizomycotina</taxon>
        <taxon>Sordariomycetes</taxon>
        <taxon>Hypocreomycetidae</taxon>
        <taxon>Hypocreales</taxon>
        <taxon>Hypocreaceae</taxon>
        <taxon>Trichoderma</taxon>
    </lineage>
</organism>
<protein>
    <recommendedName>
        <fullName>Leucine aminopeptidase 1</fullName>
        <ecNumber>3.4.11.-</ecNumber>
    </recommendedName>
    <alternativeName>
        <fullName>Leucyl aminopeptidase 1</fullName>
        <shortName>LAP1</shortName>
    </alternativeName>
    <alternativeName>
        <fullName>Peptidase p2920</fullName>
    </alternativeName>
</protein>
<dbReference type="EC" id="3.4.11.-"/>
<dbReference type="EMBL" id="AM294973">
    <property type="protein sequence ID" value="CAL25573.1"/>
    <property type="molecule type" value="mRNA"/>
</dbReference>
<dbReference type="SMR" id="A4V8W0"/>
<dbReference type="MEROPS" id="M28.022"/>
<dbReference type="GlyCosmos" id="A4V8W0">
    <property type="glycosylation" value="1 site, No reported glycans"/>
</dbReference>
<dbReference type="GO" id="GO:0005576">
    <property type="term" value="C:extracellular region"/>
    <property type="evidence" value="ECO:0007669"/>
    <property type="project" value="UniProtKB-SubCell"/>
</dbReference>
<dbReference type="GO" id="GO:0004177">
    <property type="term" value="F:aminopeptidase activity"/>
    <property type="evidence" value="ECO:0007669"/>
    <property type="project" value="UniProtKB-KW"/>
</dbReference>
<dbReference type="GO" id="GO:0046872">
    <property type="term" value="F:metal ion binding"/>
    <property type="evidence" value="ECO:0007669"/>
    <property type="project" value="UniProtKB-KW"/>
</dbReference>
<dbReference type="GO" id="GO:0008235">
    <property type="term" value="F:metalloexopeptidase activity"/>
    <property type="evidence" value="ECO:0007669"/>
    <property type="project" value="InterPro"/>
</dbReference>
<dbReference type="GO" id="GO:0006508">
    <property type="term" value="P:proteolysis"/>
    <property type="evidence" value="ECO:0007669"/>
    <property type="project" value="UniProtKB-KW"/>
</dbReference>
<dbReference type="CDD" id="cd03879">
    <property type="entry name" value="M28_AAP"/>
    <property type="match status" value="1"/>
</dbReference>
<dbReference type="FunFam" id="3.40.630.10:FF:000042">
    <property type="entry name" value="Peptide hydrolase"/>
    <property type="match status" value="1"/>
</dbReference>
<dbReference type="Gene3D" id="3.40.630.10">
    <property type="entry name" value="Zn peptidases"/>
    <property type="match status" value="1"/>
</dbReference>
<dbReference type="InterPro" id="IPR045175">
    <property type="entry name" value="M28_fam"/>
</dbReference>
<dbReference type="InterPro" id="IPR007484">
    <property type="entry name" value="Peptidase_M28"/>
</dbReference>
<dbReference type="PANTHER" id="PTHR12147:SF56">
    <property type="entry name" value="AMINOPEPTIDASE YDR415C-RELATED"/>
    <property type="match status" value="1"/>
</dbReference>
<dbReference type="PANTHER" id="PTHR12147">
    <property type="entry name" value="METALLOPEPTIDASE M28 FAMILY MEMBER"/>
    <property type="match status" value="1"/>
</dbReference>
<dbReference type="Pfam" id="PF04389">
    <property type="entry name" value="Peptidase_M28"/>
    <property type="match status" value="1"/>
</dbReference>
<dbReference type="SUPFAM" id="SSF53187">
    <property type="entry name" value="Zn-dependent exopeptidases"/>
    <property type="match status" value="1"/>
</dbReference>
<keyword id="KW-0031">Aminopeptidase</keyword>
<keyword id="KW-1015">Disulfide bond</keyword>
<keyword id="KW-0325">Glycoprotein</keyword>
<keyword id="KW-0378">Hydrolase</keyword>
<keyword id="KW-0479">Metal-binding</keyword>
<keyword id="KW-0645">Protease</keyword>
<keyword id="KW-0964">Secreted</keyword>
<keyword id="KW-0732">Signal</keyword>
<keyword id="KW-0862">Zinc</keyword>
<keyword id="KW-0865">Zymogen</keyword>
<sequence>MKFLQTSLIAAALPAALVSGRFVIENEGDNVQLDEPAKYLIELSPGETQWVTEEDKWDLRRNGQNFMDITDTQELGTLRAWTQSQASVAFPDKCVKQKEVGELAGHLTKDGMRRNLEKLTSFHTRYYKSDYGRQSSEWVLERINGIIKDAGAEDTVTAEHFGHSWPQSSVIARIPGKTNTTVIIGAHQDSINLWLPSILGAPGADDDGSGTVTIMEVFHTLLKAKDVVGGSAPNTVEFHWYSAEEGGLLGSQAIFQSYEKEGRDVKAMLQQDMTGFVQGTEDAGKPESVGVITDFVHPGLTAFIKKVIEEYCSIPWVETKCGYACSDHASASKAGYPSAFVIESAFENSDQHIHGTDDLIKYLSFDHMLEHAKMTLGLVYELAYHDFSSKAVEEPSEL</sequence>
<name>LAP1_TRIHA</name>
<comment type="function">
    <text evidence="1">Extracellular aminopeptidase that allows assimilation of proteinaceous substrates.</text>
</comment>
<comment type="cofactor">
    <cofactor evidence="1">
        <name>Zn(2+)</name>
        <dbReference type="ChEBI" id="CHEBI:29105"/>
    </cofactor>
    <text evidence="1">Binds 2 Zn(2+) ions per subunit.</text>
</comment>
<comment type="subunit">
    <text evidence="1">Monomer.</text>
</comment>
<comment type="subcellular location">
    <subcellularLocation>
        <location evidence="1">Secreted</location>
    </subcellularLocation>
</comment>
<comment type="induction">
    <text evidence="3">Expressed in presence of glucose, chitin or fungal cell walls. However, lower levels of expression were found on chitin. Also expressed in carbon starvation conditions.</text>
</comment>
<comment type="similarity">
    <text evidence="4">Belongs to the peptidase M28 family. M28E subfamily.</text>
</comment>
<accession>A4V8W0</accession>
<evidence type="ECO:0000250" key="1"/>
<evidence type="ECO:0000255" key="2"/>
<evidence type="ECO:0000269" key="3">
    <source>
    </source>
</evidence>
<evidence type="ECO:0000305" key="4"/>
<gene>
    <name type="primary">lap1</name>
    <name type="synonym">p2920</name>
</gene>
<reference key="1">
    <citation type="journal article" date="2007" name="Curr. Genet.">
        <title>Characterization of genes encoding novel peptidases in the biocontrol fungus Trichoderma harzianum CECT 2413 using the TrichoEST functional genomics approach.</title>
        <authorList>
            <person name="Suarez M.B."/>
            <person name="Vizcaino J.A."/>
            <person name="Llobell A."/>
            <person name="Monte E."/>
        </authorList>
    </citation>
    <scope>NUCLEOTIDE SEQUENCE [MRNA]</scope>
    <scope>INDUCTION</scope>
    <source>
        <strain>ATCC 48131 / CBS 354.33 / CECT 2413 / VTT D-80150</strain>
    </source>
</reference>
<feature type="signal peptide" evidence="2">
    <location>
        <begin position="1"/>
        <end position="20"/>
    </location>
</feature>
<feature type="propeptide" id="PRO_0000412450" evidence="1">
    <location>
        <begin position="21"/>
        <end position="87"/>
    </location>
</feature>
<feature type="chain" id="PRO_0000412451" description="Leucine aminopeptidase 1">
    <location>
        <begin position="88"/>
        <end position="398"/>
    </location>
</feature>
<feature type="binding site" evidence="1">
    <location>
        <position position="187"/>
    </location>
    <ligand>
        <name>Zn(2+)</name>
        <dbReference type="ChEBI" id="CHEBI:29105"/>
        <label>1</label>
    </ligand>
</feature>
<feature type="binding site" evidence="1">
    <location>
        <position position="206"/>
    </location>
    <ligand>
        <name>Zn(2+)</name>
        <dbReference type="ChEBI" id="CHEBI:29105"/>
        <label>1</label>
    </ligand>
</feature>
<feature type="binding site" evidence="1">
    <location>
        <position position="206"/>
    </location>
    <ligand>
        <name>Zn(2+)</name>
        <dbReference type="ChEBI" id="CHEBI:29105"/>
        <label>2</label>
        <note>catalytic</note>
    </ligand>
</feature>
<feature type="binding site" evidence="1">
    <location>
        <position position="245"/>
    </location>
    <ligand>
        <name>Zn(2+)</name>
        <dbReference type="ChEBI" id="CHEBI:29105"/>
        <label>2</label>
        <note>catalytic</note>
    </ligand>
</feature>
<feature type="binding site" evidence="1">
    <location>
        <position position="272"/>
    </location>
    <ligand>
        <name>Zn(2+)</name>
        <dbReference type="ChEBI" id="CHEBI:29105"/>
        <label>1</label>
    </ligand>
</feature>
<feature type="binding site" evidence="1">
    <location>
        <position position="354"/>
    </location>
    <ligand>
        <name>Zn(2+)</name>
        <dbReference type="ChEBI" id="CHEBI:29105"/>
        <label>2</label>
        <note>catalytic</note>
    </ligand>
</feature>
<feature type="glycosylation site" description="N-linked (GlcNAc...) asparagine" evidence="2">
    <location>
        <position position="179"/>
    </location>
</feature>
<feature type="disulfide bond" evidence="1">
    <location>
        <begin position="321"/>
        <end position="325"/>
    </location>
</feature>